<sequence>MTRLSILLLLISLVYSTPYPQTQISKKIGDDATLSCSRNNINDYVVMSAWYKEPNSIILLAAKSDVLYFDNYTKDKISYDSPYDDLVTTITIKSLTAKDAGTYVCAFFMTSTTNDTDKVDYEEYSTELIVNTDSESTIDIILSGSSHSPETSSEKPDYINNFNCSLVFEIATPGPITDNVENHTDTVTYTSDIINTVSTSSRESTTVKTSGPITNKEDHTVTDTVSYTTVSTSSEIVTTKSTANDAHNDNEPSTVSPTTVKNITKSIGKYSTKDYVKVFGIAALIILSAVAIFCITYYICNKRSRKYKTENKV</sequence>
<protein>
    <recommendedName>
        <fullName>Protein OPG185</fullName>
    </recommendedName>
    <alternativeName>
        <fullName>Hemagglutinin</fullName>
    </alternativeName>
</protein>
<keyword id="KW-1015">Disulfide bond</keyword>
<keyword id="KW-0244">Early protein</keyword>
<keyword id="KW-0325">Glycoprotein</keyword>
<keyword id="KW-0348">Hemagglutinin</keyword>
<keyword id="KW-1043">Host membrane</keyword>
<keyword id="KW-0393">Immunoglobulin domain</keyword>
<keyword id="KW-0426">Late protein</keyword>
<keyword id="KW-0472">Membrane</keyword>
<keyword id="KW-1185">Reference proteome</keyword>
<keyword id="KW-0732">Signal</keyword>
<keyword id="KW-0812">Transmembrane</keyword>
<keyword id="KW-1133">Transmembrane helix</keyword>
<keyword id="KW-0261">Viral envelope protein</keyword>
<keyword id="KW-0946">Virion</keyword>
<accession>P33807</accession>
<organismHost>
    <name type="scientific">Homo sapiens</name>
    <name type="common">Human</name>
    <dbReference type="NCBI Taxonomy" id="9606"/>
</organismHost>
<reference key="1">
    <citation type="journal article" date="1991" name="Dokl. Akad. Nauk SSSR">
        <title>Creation of a clone library of fragments from the natural variola virus and study of the structural and functional organization of viral genes from a circle of hosts.</title>
        <authorList>
            <person name="Shchelkunov S.N."/>
            <person name="Marennikova S.S."/>
            <person name="Totmenin A.V."/>
            <person name="Blinov V.M."/>
            <person name="Chizhikov V.E."/>
            <person name="Gutorov V.V."/>
            <person name="Safronov P.F."/>
            <person name="Pozdnyakov S.G."/>
            <person name="Shelukhina E.M."/>
            <person name="Gashnikov P.V."/>
            <person name="Anjaparidze O.G."/>
            <person name="Sandakhchiev L.S."/>
        </authorList>
    </citation>
    <scope>NUCLEOTIDE SEQUENCE [GENOMIC DNA]</scope>
    <source>
        <strain>India-1967 / Isolate Ind3</strain>
    </source>
</reference>
<reference key="2">
    <citation type="journal article" date="1993" name="FEBS Lett.">
        <title>Genes of variola and vaccinia viruses necessary to overcome the host protective mechanisms.</title>
        <authorList>
            <person name="Shchelkunov S.N."/>
            <person name="Blinov V.M."/>
            <person name="Sandakhchiev L.S."/>
        </authorList>
    </citation>
    <scope>NUCLEOTIDE SEQUENCE [GENOMIC DNA]</scope>
    <source>
        <strain>India-1967 / Isolate Ind3</strain>
    </source>
</reference>
<feature type="signal peptide" evidence="2">
    <location>
        <begin position="1"/>
        <end position="16"/>
    </location>
</feature>
<feature type="chain" id="PRO_0000040569" description="Protein OPG185">
    <location>
        <begin position="17"/>
        <end position="313"/>
    </location>
</feature>
<feature type="topological domain" description="Virion surface" evidence="2">
    <location>
        <begin position="17"/>
        <end position="277"/>
    </location>
</feature>
<feature type="transmembrane region" description="Helical" evidence="2">
    <location>
        <begin position="278"/>
        <end position="301"/>
    </location>
</feature>
<feature type="topological domain" description="Intravirion" evidence="2">
    <location>
        <begin position="302"/>
        <end position="313"/>
    </location>
</feature>
<feature type="domain" description="Ig-like V-type">
    <location>
        <begin position="18"/>
        <end position="121"/>
    </location>
</feature>
<feature type="glycosylation site" description="N-linked (GlcNAc...) asparagine; by host" evidence="2">
    <location>
        <position position="71"/>
    </location>
</feature>
<feature type="glycosylation site" description="N-linked (GlcNAc...) asparagine; by host" evidence="2">
    <location>
        <position position="114"/>
    </location>
</feature>
<feature type="glycosylation site" description="N-linked (GlcNAc...) asparagine; by host" evidence="2">
    <location>
        <position position="163"/>
    </location>
</feature>
<feature type="glycosylation site" description="N-linked (GlcNAc...) asparagine; by host" evidence="2">
    <location>
        <position position="182"/>
    </location>
</feature>
<feature type="glycosylation site" description="N-linked (GlcNAc...) asparagine; by host" evidence="2">
    <location>
        <position position="262"/>
    </location>
</feature>
<feature type="disulfide bond" evidence="3">
    <location>
        <begin position="36"/>
        <end position="105"/>
    </location>
</feature>
<organism>
    <name type="scientific">Variola virus (isolate Human/India/Ind3/1967)</name>
    <name type="common">VARV</name>
    <name type="synonym">Smallpox virus</name>
    <dbReference type="NCBI Taxonomy" id="587200"/>
    <lineage>
        <taxon>Viruses</taxon>
        <taxon>Varidnaviria</taxon>
        <taxon>Bamfordvirae</taxon>
        <taxon>Nucleocytoviricota</taxon>
        <taxon>Pokkesviricetes</taxon>
        <taxon>Chitovirales</taxon>
        <taxon>Poxviridae</taxon>
        <taxon>Chordopoxvirinae</taxon>
        <taxon>Orthopoxvirus</taxon>
        <taxon>Variola virus</taxon>
    </lineage>
</organism>
<proteinExistence type="evidence at transcript level"/>
<comment type="function">
    <text evidence="1">Prevents cell to cell fusion by interacting with and directing the viral OPG040 protein on the host plasma membrane. The OPG185-OPG040 complex associates with components of the entry fusion complex (EFC) presumably to avoid superinfection and syncytium formation. Via its interaction with C3/VCP protein, protects the infected cell and probably also the extracellular enveloped virus from complement attack.</text>
</comment>
<comment type="subunit">
    <text evidence="1">Heterodimerizes with OPG040. The heterodimer OPG185-OPG040 interacts with components of the entry fusion complex OPG143 and OPG094. Heterodimer with C3/VPC protein; disulfide-linked.</text>
</comment>
<comment type="subcellular location">
    <subcellularLocation>
        <location evidence="1">Virion membrane</location>
        <topology evidence="1">Single-pass type I membrane protein</topology>
    </subcellularLocation>
    <subcellularLocation>
        <location evidence="1">Host membrane</location>
        <topology evidence="1">Single-pass type I membrane protein</topology>
    </subcellularLocation>
    <text evidence="1">Component of extracellular enveloped virus (EEV) but not intracellular mature virus (IMV). Component of the outermost membrane of EEV.</text>
</comment>
<comment type="induction">
    <text>Expressed in the early phase of the viral replicative cycle.</text>
</comment>
<comment type="PTM">
    <text evidence="1">Glycosylated; contains phosphate and sulfate-substituted glycans. O-glycosylation is required for hemagglutination and hemadsorption activities of infected cell membranes.</text>
</comment>
<comment type="similarity">
    <text evidence="4">Belongs to the orthopoxvirus OPG185 family.</text>
</comment>
<dbReference type="EMBL" id="X69198">
    <property type="protein sequence ID" value="CAA49108.1"/>
    <property type="molecule type" value="Genomic_DNA"/>
</dbReference>
<dbReference type="EMBL" id="X67118">
    <property type="protein sequence ID" value="CAA47552.1"/>
    <property type="molecule type" value="Genomic_DNA"/>
</dbReference>
<dbReference type="PIR" id="H36854">
    <property type="entry name" value="H36854"/>
</dbReference>
<dbReference type="RefSeq" id="NP_042211.1">
    <property type="nucleotide sequence ID" value="NC_001611.1"/>
</dbReference>
<dbReference type="SMR" id="P33807"/>
<dbReference type="GlyCosmos" id="P33807">
    <property type="glycosylation" value="5 sites, No reported glycans"/>
</dbReference>
<dbReference type="GeneID" id="1486455"/>
<dbReference type="KEGG" id="vg:1486455"/>
<dbReference type="Proteomes" id="UP000002060">
    <property type="component" value="Segment"/>
</dbReference>
<dbReference type="GO" id="GO:0033644">
    <property type="term" value="C:host cell membrane"/>
    <property type="evidence" value="ECO:0007669"/>
    <property type="project" value="UniProtKB-SubCell"/>
</dbReference>
<dbReference type="GO" id="GO:0016020">
    <property type="term" value="C:membrane"/>
    <property type="evidence" value="ECO:0007669"/>
    <property type="project" value="UniProtKB-KW"/>
</dbReference>
<dbReference type="GO" id="GO:0019031">
    <property type="term" value="C:viral envelope"/>
    <property type="evidence" value="ECO:0007669"/>
    <property type="project" value="UniProtKB-KW"/>
</dbReference>
<dbReference type="GO" id="GO:0055036">
    <property type="term" value="C:virion membrane"/>
    <property type="evidence" value="ECO:0007669"/>
    <property type="project" value="UniProtKB-SubCell"/>
</dbReference>
<dbReference type="Gene3D" id="2.60.40.10">
    <property type="entry name" value="Immunoglobulins"/>
    <property type="match status" value="1"/>
</dbReference>
<dbReference type="InterPro" id="IPR007110">
    <property type="entry name" value="Ig-like_dom"/>
</dbReference>
<dbReference type="InterPro" id="IPR036179">
    <property type="entry name" value="Ig-like_dom_sf"/>
</dbReference>
<dbReference type="InterPro" id="IPR013783">
    <property type="entry name" value="Ig-like_fold"/>
</dbReference>
<dbReference type="InterPro" id="IPR003599">
    <property type="entry name" value="Ig_sub"/>
</dbReference>
<dbReference type="InterPro" id="IPR013106">
    <property type="entry name" value="Ig_V-set"/>
</dbReference>
<dbReference type="Pfam" id="PF07686">
    <property type="entry name" value="V-set"/>
    <property type="match status" value="1"/>
</dbReference>
<dbReference type="SMART" id="SM00409">
    <property type="entry name" value="IG"/>
    <property type="match status" value="1"/>
</dbReference>
<dbReference type="SUPFAM" id="SSF48726">
    <property type="entry name" value="Immunoglobulin"/>
    <property type="match status" value="1"/>
</dbReference>
<dbReference type="PROSITE" id="PS50835">
    <property type="entry name" value="IG_LIKE"/>
    <property type="match status" value="1"/>
</dbReference>
<evidence type="ECO:0000250" key="1">
    <source>
        <dbReference type="UniProtKB" id="Q01218"/>
    </source>
</evidence>
<evidence type="ECO:0000255" key="2"/>
<evidence type="ECO:0000255" key="3">
    <source>
        <dbReference type="PROSITE-ProRule" id="PRU00114"/>
    </source>
</evidence>
<evidence type="ECO:0000305" key="4"/>
<gene>
    <name type="primary">OPG185</name>
    <name type="synonym">HA</name>
    <name type="ORF">A56R</name>
    <name type="ORF">J9R</name>
</gene>
<name>HEMA_VAR67</name>